<proteinExistence type="evidence at protein level"/>
<gene>
    <name evidence="16" type="primary">Abcb6</name>
</gene>
<keyword id="KW-0067">ATP-binding</keyword>
<keyword id="KW-1003">Cell membrane</keyword>
<keyword id="KW-0903">Direct protein sequencing</keyword>
<keyword id="KW-1015">Disulfide bond</keyword>
<keyword id="KW-0256">Endoplasmic reticulum</keyword>
<keyword id="KW-0967">Endosome</keyword>
<keyword id="KW-0333">Golgi apparatus</keyword>
<keyword id="KW-0458">Lysosome</keyword>
<keyword id="KW-0472">Membrane</keyword>
<keyword id="KW-0496">Mitochondrion</keyword>
<keyword id="KW-1000">Mitochondrion outer membrane</keyword>
<keyword id="KW-0547">Nucleotide-binding</keyword>
<keyword id="KW-1185">Reference proteome</keyword>
<keyword id="KW-0964">Secreted</keyword>
<keyword id="KW-1278">Translocase</keyword>
<keyword id="KW-0812">Transmembrane</keyword>
<keyword id="KW-1133">Transmembrane helix</keyword>
<keyword id="KW-0813">Transport</keyword>
<organism>
    <name type="scientific">Mus musculus</name>
    <name type="common">Mouse</name>
    <dbReference type="NCBI Taxonomy" id="10090"/>
    <lineage>
        <taxon>Eukaryota</taxon>
        <taxon>Metazoa</taxon>
        <taxon>Chordata</taxon>
        <taxon>Craniata</taxon>
        <taxon>Vertebrata</taxon>
        <taxon>Euteleostomi</taxon>
        <taxon>Mammalia</taxon>
        <taxon>Eutheria</taxon>
        <taxon>Euarchontoglires</taxon>
        <taxon>Glires</taxon>
        <taxon>Rodentia</taxon>
        <taxon>Myomorpha</taxon>
        <taxon>Muroidea</taxon>
        <taxon>Muridae</taxon>
        <taxon>Murinae</taxon>
        <taxon>Mus</taxon>
        <taxon>Mus</taxon>
    </lineage>
</organism>
<comment type="function">
    <text evidence="2 3 7 10 13">ATP-dependent transporter that catalyzes the transport of a broad-spectrum of porphyrins from the cytoplasm to the extracellular space through the plasma membrane or into the vesicle lumen (PubMed:27507172). May also function as an ATP-dependent importer of porphyrins from the cytoplasm into the mitochondria, in turn may participate in the de novo heme biosynthesis regulation and in the coordination of heme and iron homeostasis during phenylhydrazine stress (PubMed:17006453, PubMed:22294697). May play a key role in the early steps of melanogenesis producing PMEL amyloid fibrils (By similarity). In vitro, it confers to cells a resistance to toxic metal such as arsenic and cadmium and against chemotherapeutics agent such as 5-fluorouracil, SN-38 and vincristin (By similarity). In addition may play a role in the transition metal homeostasis (By similarity).</text>
</comment>
<comment type="catalytic activity">
    <reaction evidence="10 13">
        <text>coproporphyrin III(in) + ATP + H2O = coproporphyrin III(out) + ADP + phosphate + H(+)</text>
        <dbReference type="Rhea" id="RHEA:66664"/>
        <dbReference type="ChEBI" id="CHEBI:15377"/>
        <dbReference type="ChEBI" id="CHEBI:15378"/>
        <dbReference type="ChEBI" id="CHEBI:30616"/>
        <dbReference type="ChEBI" id="CHEBI:43474"/>
        <dbReference type="ChEBI" id="CHEBI:131725"/>
        <dbReference type="ChEBI" id="CHEBI:456216"/>
    </reaction>
    <physiologicalReaction direction="left-to-right" evidence="10 13">
        <dbReference type="Rhea" id="RHEA:66665"/>
    </physiologicalReaction>
</comment>
<comment type="catalytic activity">
    <reaction evidence="15">
        <text>coproporphyrinogen III(in) + ATP + H2O = coproporphyrinogen III(out) + ADP + phosphate + H(+)</text>
        <dbReference type="Rhea" id="RHEA:66680"/>
        <dbReference type="ChEBI" id="CHEBI:15377"/>
        <dbReference type="ChEBI" id="CHEBI:15378"/>
        <dbReference type="ChEBI" id="CHEBI:30616"/>
        <dbReference type="ChEBI" id="CHEBI:43474"/>
        <dbReference type="ChEBI" id="CHEBI:57309"/>
        <dbReference type="ChEBI" id="CHEBI:456216"/>
    </reaction>
    <physiologicalReaction direction="left-to-right" evidence="15">
        <dbReference type="Rhea" id="RHEA:66681"/>
    </physiologicalReaction>
</comment>
<comment type="catalytic activity">
    <reaction evidence="3">
        <text>heme b(in) + ATP + H2O = heme b(out) + ADP + phosphate + H(+)</text>
        <dbReference type="Rhea" id="RHEA:19261"/>
        <dbReference type="ChEBI" id="CHEBI:15377"/>
        <dbReference type="ChEBI" id="CHEBI:15378"/>
        <dbReference type="ChEBI" id="CHEBI:30616"/>
        <dbReference type="ChEBI" id="CHEBI:43474"/>
        <dbReference type="ChEBI" id="CHEBI:60344"/>
        <dbReference type="ChEBI" id="CHEBI:456216"/>
        <dbReference type="EC" id="7.6.2.5"/>
    </reaction>
    <physiologicalReaction direction="left-to-right" evidence="3">
        <dbReference type="Rhea" id="RHEA:19262"/>
    </physiologicalReaction>
</comment>
<comment type="catalytic activity">
    <reaction evidence="3">
        <text>pheophorbide a(in) + ATP + H2O = pheophorbide a(out) + ADP + phosphate + H(+)</text>
        <dbReference type="Rhea" id="RHEA:61360"/>
        <dbReference type="ChEBI" id="CHEBI:15377"/>
        <dbReference type="ChEBI" id="CHEBI:15378"/>
        <dbReference type="ChEBI" id="CHEBI:30616"/>
        <dbReference type="ChEBI" id="CHEBI:43474"/>
        <dbReference type="ChEBI" id="CHEBI:58687"/>
        <dbReference type="ChEBI" id="CHEBI:456216"/>
    </reaction>
    <physiologicalReaction direction="left-to-right" evidence="3">
        <dbReference type="Rhea" id="RHEA:61361"/>
    </physiologicalReaction>
</comment>
<comment type="catalytic activity">
    <reaction evidence="13">
        <text>protoporphyrin IX(in) + ATP + H2O = protoporphyrin IX(out) + ADP + phosphate + H(+)</text>
        <dbReference type="Rhea" id="RHEA:61336"/>
        <dbReference type="ChEBI" id="CHEBI:15377"/>
        <dbReference type="ChEBI" id="CHEBI:15378"/>
        <dbReference type="ChEBI" id="CHEBI:30616"/>
        <dbReference type="ChEBI" id="CHEBI:43474"/>
        <dbReference type="ChEBI" id="CHEBI:57306"/>
        <dbReference type="ChEBI" id="CHEBI:456216"/>
    </reaction>
    <physiologicalReaction direction="left-to-right" evidence="13">
        <dbReference type="Rhea" id="RHEA:61337"/>
    </physiologicalReaction>
</comment>
<comment type="catalytic activity">
    <reaction evidence="13">
        <text>coproporphyrin I(in) + ATP + H2O = coproporphyrin I(out) + ADP + phosphate + H(+)</text>
        <dbReference type="Rhea" id="RHEA:66768"/>
        <dbReference type="ChEBI" id="CHEBI:15377"/>
        <dbReference type="ChEBI" id="CHEBI:15378"/>
        <dbReference type="ChEBI" id="CHEBI:30616"/>
        <dbReference type="ChEBI" id="CHEBI:43474"/>
        <dbReference type="ChEBI" id="CHEBI:167478"/>
        <dbReference type="ChEBI" id="CHEBI:456216"/>
    </reaction>
    <physiologicalReaction direction="left-to-right" evidence="13">
        <dbReference type="Rhea" id="RHEA:66769"/>
    </physiologicalReaction>
</comment>
<comment type="catalytic activity">
    <reaction evidence="13">
        <text>uroporphyrin I(in) + ATP + H2O = uroporphyrin I(out) + ADP + phosphate + H(+)</text>
        <dbReference type="Rhea" id="RHEA:66772"/>
        <dbReference type="ChEBI" id="CHEBI:15377"/>
        <dbReference type="ChEBI" id="CHEBI:15378"/>
        <dbReference type="ChEBI" id="CHEBI:30616"/>
        <dbReference type="ChEBI" id="CHEBI:43474"/>
        <dbReference type="ChEBI" id="CHEBI:167480"/>
        <dbReference type="ChEBI" id="CHEBI:456216"/>
    </reaction>
    <physiologicalReaction direction="left-to-right" evidence="13">
        <dbReference type="Rhea" id="RHEA:66773"/>
    </physiologicalReaction>
</comment>
<comment type="catalytic activity">
    <reaction evidence="13">
        <text>uroporphyrin III(in) + ATP + H2O = uroporphyrin III(out) + ADP + phosphate + H(+)</text>
        <dbReference type="Rhea" id="RHEA:66776"/>
        <dbReference type="ChEBI" id="CHEBI:15377"/>
        <dbReference type="ChEBI" id="CHEBI:15378"/>
        <dbReference type="ChEBI" id="CHEBI:30616"/>
        <dbReference type="ChEBI" id="CHEBI:43474"/>
        <dbReference type="ChEBI" id="CHEBI:167479"/>
        <dbReference type="ChEBI" id="CHEBI:456216"/>
    </reaction>
    <physiologicalReaction direction="left-to-right" evidence="13">
        <dbReference type="Rhea" id="RHEA:66777"/>
    </physiologicalReaction>
</comment>
<comment type="biophysicochemical properties">
    <kinetics>
        <KM evidence="10">12.6 uM for coproporphyrin III</KM>
        <Vmax>9.8 pmol/min/mg enzyme toward coproporphyrin III</Vmax>
        <Vmax evidence="13">59.4 pmol/min/mg enzyme toward coproporphyrin III</Vmax>
    </kinetics>
</comment>
<comment type="subunit">
    <text evidence="7">Homodimer.</text>
</comment>
<comment type="subcellular location">
    <subcellularLocation>
        <location evidence="3">Cell membrane</location>
        <topology evidence="4">Multi-pass membrane protein</topology>
    </subcellularLocation>
    <subcellularLocation>
        <location evidence="7">Mitochondrion outer membrane</location>
        <topology evidence="4">Multi-pass membrane protein</topology>
    </subcellularLocation>
    <subcellularLocation>
        <location evidence="3">Endoplasmic reticulum membrane</location>
        <topology evidence="4">Multi-pass membrane protein</topology>
    </subcellularLocation>
    <subcellularLocation>
        <location evidence="3">Golgi apparatus membrane</location>
        <topology evidence="4">Multi-pass membrane protein</topology>
    </subcellularLocation>
    <subcellularLocation>
        <location evidence="12">Endosome membrane</location>
        <topology evidence="4">Multi-pass membrane protein</topology>
    </subcellularLocation>
    <subcellularLocation>
        <location evidence="3">Lysosome membrane</location>
    </subcellularLocation>
    <subcellularLocation>
        <location evidence="2">Late endosome membrane</location>
    </subcellularLocation>
    <subcellularLocation>
        <location evidence="2">Early endosome membrane</location>
    </subcellularLocation>
    <subcellularLocation>
        <location evidence="11">Secreted</location>
        <location evidence="11">Extracellular exosome</location>
    </subcellularLocation>
    <subcellularLocation>
        <location evidence="3">Mitochondrion</location>
    </subcellularLocation>
    <subcellularLocation>
        <location evidence="3">Endosome</location>
        <location evidence="3">Multivesicular body membrane</location>
    </subcellularLocation>
    <subcellularLocation>
        <location evidence="3">Melanosome membrane</location>
    </subcellularLocation>
    <text evidence="2 3">Present in the membrane of mature erythrocytes and in exosomes released from reticulocytes during the final steps of erythroid maturation. Traffics from endoplasmic reticulum to Golgi during its glycans's maturation, therefrom is first targeted to the plasma membrane, and is rapidly internalized through endocytosis to be distributed to the limiting membrane of multivesicular bodies and lysosomes. Localized on the limiting membrane of early melanosomes of pigment cells (By similarity). Targeted to the endolysosomal compartment (By similarity).</text>
</comment>
<comment type="developmental stage">
    <text evidence="7">Highly expressed in embryonic liver.</text>
</comment>
<comment type="induction">
    <text evidence="7 9 10 11">Up-regulated during erythroid differentiation and heme biosynthesis (PubMed:17006453, PubMed:22294697). Up-regulated by cellular porphyrins (at protein level) (PubMed:17006453). Up-regulated in red blood cells under anemic condition (PubMed:22655043). Induced by sodium arsenite in a dose-dependent manner (PubMed:21266531).</text>
</comment>
<comment type="domain">
    <text evidence="3">Contains two independently folding units, the N-terminal transmembrane domain (residues 1-205) and the ABC-core domain (206-842) are respectively responsible for the lysosomal targeting and the ATPase activity.</text>
</comment>
<comment type="PTM">
    <text evidence="8">N-glycosylated.</text>
</comment>
<comment type="disruption phenotype">
    <text evidence="10 13">Homozygous knockout mice for Abcb6 gene appear phenotypically normal (PubMed:22294697). In a ferrochelatase-deficient mouse model where Abcb6 has been homozygously disrupted, mice exacerbate porphyria phenotypes shown by increased porphyrin accumulation, and marked liver injury (PubMed:27507172).</text>
</comment>
<comment type="similarity">
    <text evidence="14">Belongs to the ABC transporter superfamily. ABCB family. Heavy Metal importer (TC 3.A.1.210) subfamily.</text>
</comment>
<comment type="caution">
    <text evidence="3">To date, the intracellular localization of ABCB6 is a matter of debate, with conflicting reports suggesting mitochondrial or endolysosomal localization, therefore questioning the requirement of ABCB6 in the mitochondrial import of porphyrins.</text>
</comment>
<comment type="sequence caution" evidence="14">
    <conflict type="frameshift">
        <sequence resource="EMBL-CDS" id="BAE30168"/>
    </conflict>
</comment>
<evidence type="ECO:0000250" key="1"/>
<evidence type="ECO:0000250" key="2">
    <source>
        <dbReference type="UniProtKB" id="O70595"/>
    </source>
</evidence>
<evidence type="ECO:0000250" key="3">
    <source>
        <dbReference type="UniProtKB" id="Q9NP58"/>
    </source>
</evidence>
<evidence type="ECO:0000255" key="4"/>
<evidence type="ECO:0000255" key="5">
    <source>
        <dbReference type="PROSITE-ProRule" id="PRU00434"/>
    </source>
</evidence>
<evidence type="ECO:0000255" key="6">
    <source>
        <dbReference type="PROSITE-ProRule" id="PRU00441"/>
    </source>
</evidence>
<evidence type="ECO:0000269" key="7">
    <source>
    </source>
</evidence>
<evidence type="ECO:0000269" key="8">
    <source>
    </source>
</evidence>
<evidence type="ECO:0000269" key="9">
    <source>
    </source>
</evidence>
<evidence type="ECO:0000269" key="10">
    <source>
    </source>
</evidence>
<evidence type="ECO:0000269" key="11">
    <source>
    </source>
</evidence>
<evidence type="ECO:0000269" key="12">
    <source>
    </source>
</evidence>
<evidence type="ECO:0000269" key="13">
    <source>
    </source>
</evidence>
<evidence type="ECO:0000305" key="14"/>
<evidence type="ECO:0000305" key="15">
    <source>
    </source>
</evidence>
<evidence type="ECO:0000312" key="16">
    <source>
        <dbReference type="MGI" id="MGI:1921354"/>
    </source>
</evidence>
<dbReference type="EC" id="7.6.2.5" evidence="3"/>
<dbReference type="EMBL" id="AK004605">
    <property type="protein sequence ID" value="BAB23404.1"/>
    <property type="molecule type" value="mRNA"/>
</dbReference>
<dbReference type="EMBL" id="AK150853">
    <property type="protein sequence ID" value="BAE29909.1"/>
    <property type="molecule type" value="mRNA"/>
</dbReference>
<dbReference type="EMBL" id="AK151165">
    <property type="protein sequence ID" value="BAE30168.1"/>
    <property type="status" value="ALT_FRAME"/>
    <property type="molecule type" value="mRNA"/>
</dbReference>
<dbReference type="EMBL" id="AK152584">
    <property type="protein sequence ID" value="BAE31334.1"/>
    <property type="molecule type" value="mRNA"/>
</dbReference>
<dbReference type="EMBL" id="AK168642">
    <property type="protein sequence ID" value="BAE40501.1"/>
    <property type="molecule type" value="mRNA"/>
</dbReference>
<dbReference type="EMBL" id="BC006634">
    <property type="protein sequence ID" value="AAH06634.1"/>
    <property type="molecule type" value="mRNA"/>
</dbReference>
<dbReference type="CCDS" id="CCDS15065.1"/>
<dbReference type="RefSeq" id="NP_076221.1">
    <property type="nucleotide sequence ID" value="NM_023732.3"/>
</dbReference>
<dbReference type="SMR" id="Q9DC29"/>
<dbReference type="BioGRID" id="216495">
    <property type="interactions" value="6"/>
</dbReference>
<dbReference type="FunCoup" id="Q9DC29">
    <property type="interactions" value="1946"/>
</dbReference>
<dbReference type="STRING" id="10090.ENSMUSP00000027396"/>
<dbReference type="GlyGen" id="Q9DC29">
    <property type="glycosylation" value="1 site"/>
</dbReference>
<dbReference type="iPTMnet" id="Q9DC29"/>
<dbReference type="PhosphoSitePlus" id="Q9DC29"/>
<dbReference type="SwissPalm" id="Q9DC29"/>
<dbReference type="jPOST" id="Q9DC29"/>
<dbReference type="PaxDb" id="10090-ENSMUSP00000027396"/>
<dbReference type="PeptideAtlas" id="Q9DC29"/>
<dbReference type="ProteomicsDB" id="285901"/>
<dbReference type="Pumba" id="Q9DC29"/>
<dbReference type="Antibodypedia" id="20133">
    <property type="antibodies" value="188 antibodies from 29 providers"/>
</dbReference>
<dbReference type="DNASU" id="74104"/>
<dbReference type="Ensembl" id="ENSMUST00000027396.15">
    <property type="protein sequence ID" value="ENSMUSP00000027396.9"/>
    <property type="gene ID" value="ENSMUSG00000026198.16"/>
</dbReference>
<dbReference type="GeneID" id="74104"/>
<dbReference type="KEGG" id="mmu:74104"/>
<dbReference type="UCSC" id="uc007bnx.1">
    <property type="organism name" value="mouse"/>
</dbReference>
<dbReference type="AGR" id="MGI:1921354"/>
<dbReference type="CTD" id="10058"/>
<dbReference type="MGI" id="MGI:1921354">
    <property type="gene designation" value="Abcb6"/>
</dbReference>
<dbReference type="VEuPathDB" id="HostDB:ENSMUSG00000026198"/>
<dbReference type="eggNOG" id="KOG0056">
    <property type="taxonomic scope" value="Eukaryota"/>
</dbReference>
<dbReference type="GeneTree" id="ENSGT00940000156160"/>
<dbReference type="HOGENOM" id="CLU_000604_32_0_1"/>
<dbReference type="InParanoid" id="Q9DC29"/>
<dbReference type="OMA" id="YYGAEHY"/>
<dbReference type="OrthoDB" id="6500128at2759"/>
<dbReference type="PhylomeDB" id="Q9DC29"/>
<dbReference type="TreeFam" id="TF105194"/>
<dbReference type="Reactome" id="R-MMU-1369007">
    <property type="pathway name" value="Mitochondrial ABC transporters"/>
</dbReference>
<dbReference type="BioGRID-ORCS" id="74104">
    <property type="hits" value="4 hits in 81 CRISPR screens"/>
</dbReference>
<dbReference type="PRO" id="PR:Q9DC29"/>
<dbReference type="Proteomes" id="UP000000589">
    <property type="component" value="Chromosome 1"/>
</dbReference>
<dbReference type="RNAct" id="Q9DC29">
    <property type="molecule type" value="protein"/>
</dbReference>
<dbReference type="Bgee" id="ENSMUSG00000026198">
    <property type="expression patterns" value="Expressed in bone marrow and 82 other cell types or tissues"/>
</dbReference>
<dbReference type="ExpressionAtlas" id="Q9DC29">
    <property type="expression patterns" value="baseline and differential"/>
</dbReference>
<dbReference type="GO" id="GO:0005829">
    <property type="term" value="C:cytosol"/>
    <property type="evidence" value="ECO:0007669"/>
    <property type="project" value="Ensembl"/>
</dbReference>
<dbReference type="GO" id="GO:0031901">
    <property type="term" value="C:early endosome membrane"/>
    <property type="evidence" value="ECO:0000250"/>
    <property type="project" value="UniProtKB"/>
</dbReference>
<dbReference type="GO" id="GO:0036020">
    <property type="term" value="C:endolysosome membrane"/>
    <property type="evidence" value="ECO:0000250"/>
    <property type="project" value="UniProtKB"/>
</dbReference>
<dbReference type="GO" id="GO:0005789">
    <property type="term" value="C:endoplasmic reticulum membrane"/>
    <property type="evidence" value="ECO:0000250"/>
    <property type="project" value="UniProtKB"/>
</dbReference>
<dbReference type="GO" id="GO:0005768">
    <property type="term" value="C:endosome"/>
    <property type="evidence" value="ECO:0000314"/>
    <property type="project" value="UniProtKB"/>
</dbReference>
<dbReference type="GO" id="GO:0070062">
    <property type="term" value="C:extracellular exosome"/>
    <property type="evidence" value="ECO:0000314"/>
    <property type="project" value="UniProtKB"/>
</dbReference>
<dbReference type="GO" id="GO:0005794">
    <property type="term" value="C:Golgi apparatus"/>
    <property type="evidence" value="ECO:0000250"/>
    <property type="project" value="UniProtKB"/>
</dbReference>
<dbReference type="GO" id="GO:0000139">
    <property type="term" value="C:Golgi membrane"/>
    <property type="evidence" value="ECO:0007669"/>
    <property type="project" value="UniProtKB-SubCell"/>
</dbReference>
<dbReference type="GO" id="GO:0031902">
    <property type="term" value="C:late endosome membrane"/>
    <property type="evidence" value="ECO:0000250"/>
    <property type="project" value="UniProtKB"/>
</dbReference>
<dbReference type="GO" id="GO:0005765">
    <property type="term" value="C:lysosomal membrane"/>
    <property type="evidence" value="ECO:0000250"/>
    <property type="project" value="UniProtKB"/>
</dbReference>
<dbReference type="GO" id="GO:0033162">
    <property type="term" value="C:melanosome membrane"/>
    <property type="evidence" value="ECO:0000250"/>
    <property type="project" value="UniProtKB"/>
</dbReference>
<dbReference type="GO" id="GO:0005740">
    <property type="term" value="C:mitochondrial envelope"/>
    <property type="evidence" value="ECO:0000266"/>
    <property type="project" value="MGI"/>
</dbReference>
<dbReference type="GO" id="GO:0005741">
    <property type="term" value="C:mitochondrial outer membrane"/>
    <property type="evidence" value="ECO:0007669"/>
    <property type="project" value="UniProtKB-SubCell"/>
</dbReference>
<dbReference type="GO" id="GO:0005739">
    <property type="term" value="C:mitochondrion"/>
    <property type="evidence" value="ECO:0007005"/>
    <property type="project" value="MGI"/>
</dbReference>
<dbReference type="GO" id="GO:0032585">
    <property type="term" value="C:multivesicular body membrane"/>
    <property type="evidence" value="ECO:0000250"/>
    <property type="project" value="UniProtKB"/>
</dbReference>
<dbReference type="GO" id="GO:0005654">
    <property type="term" value="C:nucleoplasm"/>
    <property type="evidence" value="ECO:0007669"/>
    <property type="project" value="Ensembl"/>
</dbReference>
<dbReference type="GO" id="GO:0005886">
    <property type="term" value="C:plasma membrane"/>
    <property type="evidence" value="ECO:0000250"/>
    <property type="project" value="UniProtKB"/>
</dbReference>
<dbReference type="GO" id="GO:0015439">
    <property type="term" value="F:ABC-type heme transporter activity"/>
    <property type="evidence" value="ECO:0007669"/>
    <property type="project" value="UniProtKB-EC"/>
</dbReference>
<dbReference type="GO" id="GO:0140359">
    <property type="term" value="F:ABC-type transporter activity"/>
    <property type="evidence" value="ECO:0000314"/>
    <property type="project" value="UniProtKB"/>
</dbReference>
<dbReference type="GO" id="GO:0005524">
    <property type="term" value="F:ATP binding"/>
    <property type="evidence" value="ECO:0000250"/>
    <property type="project" value="UniProtKB"/>
</dbReference>
<dbReference type="GO" id="GO:0016887">
    <property type="term" value="F:ATP hydrolysis activity"/>
    <property type="evidence" value="ECO:0007669"/>
    <property type="project" value="Ensembl"/>
</dbReference>
<dbReference type="GO" id="GO:0015562">
    <property type="term" value="F:efflux transmembrane transporter activity"/>
    <property type="evidence" value="ECO:0007669"/>
    <property type="project" value="Ensembl"/>
</dbReference>
<dbReference type="GO" id="GO:0020037">
    <property type="term" value="F:heme binding"/>
    <property type="evidence" value="ECO:0007669"/>
    <property type="project" value="Ensembl"/>
</dbReference>
<dbReference type="GO" id="GO:0046906">
    <property type="term" value="F:tetrapyrrole binding"/>
    <property type="evidence" value="ECO:0000250"/>
    <property type="project" value="UniProtKB"/>
</dbReference>
<dbReference type="GO" id="GO:0007420">
    <property type="term" value="P:brain development"/>
    <property type="evidence" value="ECO:0007669"/>
    <property type="project" value="Ensembl"/>
</dbReference>
<dbReference type="GO" id="GO:0098849">
    <property type="term" value="P:cellular detoxification of cadmium ion"/>
    <property type="evidence" value="ECO:0000250"/>
    <property type="project" value="UniProtKB"/>
</dbReference>
<dbReference type="GO" id="GO:0042168">
    <property type="term" value="P:heme metabolic process"/>
    <property type="evidence" value="ECO:0000250"/>
    <property type="project" value="UniProtKB"/>
</dbReference>
<dbReference type="GO" id="GO:0035351">
    <property type="term" value="P:heme transmembrane transport"/>
    <property type="evidence" value="ECO:0000250"/>
    <property type="project" value="UniProtKB"/>
</dbReference>
<dbReference type="GO" id="GO:0006878">
    <property type="term" value="P:intracellular copper ion homeostasis"/>
    <property type="evidence" value="ECO:0000250"/>
    <property type="project" value="UniProtKB"/>
</dbReference>
<dbReference type="GO" id="GO:1903232">
    <property type="term" value="P:melanosome assembly"/>
    <property type="evidence" value="ECO:0000250"/>
    <property type="project" value="UniProtKB"/>
</dbReference>
<dbReference type="GO" id="GO:0006779">
    <property type="term" value="P:porphyrin-containing compound biosynthetic process"/>
    <property type="evidence" value="ECO:0007669"/>
    <property type="project" value="Ensembl"/>
</dbReference>
<dbReference type="GO" id="GO:0006778">
    <property type="term" value="P:porphyrin-containing compound metabolic process"/>
    <property type="evidence" value="ECO:0000314"/>
    <property type="project" value="UniProtKB"/>
</dbReference>
<dbReference type="GO" id="GO:0043588">
    <property type="term" value="P:skin development"/>
    <property type="evidence" value="ECO:0007669"/>
    <property type="project" value="Ensembl"/>
</dbReference>
<dbReference type="GO" id="GO:0033013">
    <property type="term" value="P:tetrapyrrole metabolic process"/>
    <property type="evidence" value="ECO:0000250"/>
    <property type="project" value="UniProtKB"/>
</dbReference>
<dbReference type="CDD" id="cd18581">
    <property type="entry name" value="ABC_6TM_ABCB6"/>
    <property type="match status" value="1"/>
</dbReference>
<dbReference type="CDD" id="cd03253">
    <property type="entry name" value="ABCC_ATM1_transporter"/>
    <property type="match status" value="1"/>
</dbReference>
<dbReference type="FunFam" id="1.20.1560.10:FF:000022">
    <property type="entry name" value="ATP-binding cassette sub-family B member 6, mitochondrial"/>
    <property type="match status" value="1"/>
</dbReference>
<dbReference type="FunFam" id="3.40.50.300:FF:000186">
    <property type="entry name" value="ATP-binding cassette sub-family B member 7, mitochondrial"/>
    <property type="match status" value="1"/>
</dbReference>
<dbReference type="Gene3D" id="1.20.1560.10">
    <property type="entry name" value="ABC transporter type 1, transmembrane domain"/>
    <property type="match status" value="1"/>
</dbReference>
<dbReference type="Gene3D" id="3.40.50.300">
    <property type="entry name" value="P-loop containing nucleotide triphosphate hydrolases"/>
    <property type="match status" value="1"/>
</dbReference>
<dbReference type="InterPro" id="IPR003593">
    <property type="entry name" value="AAA+_ATPase"/>
</dbReference>
<dbReference type="InterPro" id="IPR011527">
    <property type="entry name" value="ABC1_TM_dom"/>
</dbReference>
<dbReference type="InterPro" id="IPR036640">
    <property type="entry name" value="ABC1_TM_sf"/>
</dbReference>
<dbReference type="InterPro" id="IPR003439">
    <property type="entry name" value="ABC_transporter-like_ATP-bd"/>
</dbReference>
<dbReference type="InterPro" id="IPR017871">
    <property type="entry name" value="ABC_transporter-like_CS"/>
</dbReference>
<dbReference type="InterPro" id="IPR032410">
    <property type="entry name" value="ABCB6_N"/>
</dbReference>
<dbReference type="InterPro" id="IPR027417">
    <property type="entry name" value="P-loop_NTPase"/>
</dbReference>
<dbReference type="InterPro" id="IPR039421">
    <property type="entry name" value="Type_1_exporter"/>
</dbReference>
<dbReference type="PANTHER" id="PTHR24221">
    <property type="entry name" value="ATP-BINDING CASSETTE SUB-FAMILY B"/>
    <property type="match status" value="1"/>
</dbReference>
<dbReference type="PANTHER" id="PTHR24221:SF654">
    <property type="entry name" value="ATP-BINDING CASSETTE SUB-FAMILY B MEMBER 6"/>
    <property type="match status" value="1"/>
</dbReference>
<dbReference type="Pfam" id="PF00664">
    <property type="entry name" value="ABC_membrane"/>
    <property type="match status" value="1"/>
</dbReference>
<dbReference type="Pfam" id="PF00005">
    <property type="entry name" value="ABC_tran"/>
    <property type="match status" value="1"/>
</dbReference>
<dbReference type="Pfam" id="PF16185">
    <property type="entry name" value="MTABC_N"/>
    <property type="match status" value="1"/>
</dbReference>
<dbReference type="SMART" id="SM00382">
    <property type="entry name" value="AAA"/>
    <property type="match status" value="1"/>
</dbReference>
<dbReference type="SUPFAM" id="SSF90123">
    <property type="entry name" value="ABC transporter transmembrane region"/>
    <property type="match status" value="1"/>
</dbReference>
<dbReference type="SUPFAM" id="SSF52540">
    <property type="entry name" value="P-loop containing nucleoside triphosphate hydrolases"/>
    <property type="match status" value="1"/>
</dbReference>
<dbReference type="PROSITE" id="PS50929">
    <property type="entry name" value="ABC_TM1F"/>
    <property type="match status" value="1"/>
</dbReference>
<dbReference type="PROSITE" id="PS00211">
    <property type="entry name" value="ABC_TRANSPORTER_1"/>
    <property type="match status" value="1"/>
</dbReference>
<dbReference type="PROSITE" id="PS50893">
    <property type="entry name" value="ABC_TRANSPORTER_2"/>
    <property type="match status" value="1"/>
</dbReference>
<name>ABCB6_MOUSE</name>
<sequence length="842" mass="93770">MVTVGNYCETEGPAGPAWTQNGLSPCFFFTLVPSTLLTLGVLALVLVLPRRRREVPAGPEELSWAAGPRVAPYVLQLFLATLQMALPLAGLAGRVGTARGVRLPGYLLLASVLESLASVCGLWLLVVERSQARQSLAMGVWMKFRHSLGLLLLWTVTFAAENLALVSWNSPQWWWARADLGQQVQFGLWVLRYVTSGGLFILGLWAPGLRPQSYTLHVHEEDQDVGGNQGRSTDRRSTWRDLGRKLRLLSSYLWPRGSPSLQLIVLICLGLMGLERALNVLVPIFYRDIVNLLTAKAPWSSLAWTVTTYVFLKFLQGGGTGSTGFVSNLRTFLWIRVQQFTSRGVELRLFSHLHELSLRWHLGRRTGEVLRIVDRGTSSVTGLLSYLVFSIIPTLADIIIGIIYFSMFFNAWFGLIVFLCMSLYLILTIVVTEWRAKFRRDMNTQENATRARAVDSLLNFETVKYYGAEGYEVDRYREAILKFQGLEWKSTASLVVLNQTQNLVIGLGLLAGSLLCAYFVSEQKLQVGDFVLFGTYITQLYMPLNWFGTYYRMIQTNFIDMENMFDLLKEETEVKDVPGAGPLRFHKGRIEFENVHFSYADGQETLQDVSFTVMPGQTVALVGPSGAGKSTILRLLFRFYDISSGCIRIDGQDISQVTQISLRSHIGVVPQDTVLFNDTIANNIRYGRVTAGDSEVEAAAQAAGIHDAILSFPEGYETQVGERGLKLSGGEKQRVAIARTILKAPDIILLDEATSALDTSNERAIQASLAKVCTNRTTIVIAHRLSTVVNADQILVIKDGCIIERGRHEALLSRGGVYAEMWQLQQQGQETVPEESKPQDTA</sequence>
<feature type="chain" id="PRO_0000268678" description="ATP-binding cassette sub-family B member 6">
    <location>
        <begin position="1"/>
        <end position="842"/>
    </location>
</feature>
<feature type="topological domain" description="Lumenal" evidence="3">
    <location>
        <begin position="1"/>
        <end position="26"/>
    </location>
</feature>
<feature type="transmembrane region" description="Helical" evidence="4">
    <location>
        <begin position="27"/>
        <end position="47"/>
    </location>
</feature>
<feature type="topological domain" description="Cytoplasmic" evidence="14">
    <location>
        <begin position="48"/>
        <end position="72"/>
    </location>
</feature>
<feature type="transmembrane region" description="Helical" evidence="4">
    <location>
        <begin position="73"/>
        <end position="93"/>
    </location>
</feature>
<feature type="topological domain" description="Lumenal" evidence="3">
    <location>
        <begin position="94"/>
        <end position="106"/>
    </location>
</feature>
<feature type="transmembrane region" description="Helical" evidence="4">
    <location>
        <begin position="107"/>
        <end position="127"/>
    </location>
</feature>
<feature type="topological domain" description="Cytoplasmic" evidence="14">
    <location>
        <begin position="128"/>
        <end position="147"/>
    </location>
</feature>
<feature type="transmembrane region" description="Helical" evidence="4">
    <location>
        <begin position="148"/>
        <end position="168"/>
    </location>
</feature>
<feature type="topological domain" description="Lumenal" evidence="3">
    <location>
        <begin position="169"/>
        <end position="185"/>
    </location>
</feature>
<feature type="transmembrane region" description="Helical" evidence="4">
    <location>
        <begin position="186"/>
        <end position="206"/>
    </location>
</feature>
<feature type="topological domain" description="Cytoplasmic" evidence="14">
    <location>
        <begin position="207"/>
        <end position="263"/>
    </location>
</feature>
<feature type="transmembrane region" description="Helical" evidence="4 6">
    <location>
        <begin position="264"/>
        <end position="284"/>
    </location>
</feature>
<feature type="topological domain" description="Lumenal" evidence="3">
    <location>
        <begin position="285"/>
        <end position="291"/>
    </location>
</feature>
<feature type="transmembrane region" description="Helical" evidence="4 6">
    <location>
        <begin position="292"/>
        <end position="312"/>
    </location>
</feature>
<feature type="topological domain" description="Cytoplasmic" evidence="14">
    <location>
        <begin position="313"/>
        <end position="375"/>
    </location>
</feature>
<feature type="transmembrane region" description="Helical" evidence="4 6">
    <location>
        <begin position="376"/>
        <end position="396"/>
    </location>
</feature>
<feature type="topological domain" description="Lumenal" evidence="3">
    <location>
        <position position="397"/>
    </location>
</feature>
<feature type="transmembrane region" description="Helical" evidence="4 6">
    <location>
        <begin position="398"/>
        <end position="418"/>
    </location>
</feature>
<feature type="topological domain" description="Cytoplasmic" evidence="14">
    <location>
        <begin position="419"/>
        <end position="499"/>
    </location>
</feature>
<feature type="transmembrane region" description="Helical" evidence="4 6">
    <location>
        <begin position="500"/>
        <end position="520"/>
    </location>
</feature>
<feature type="topological domain" description="Lumenal" evidence="3">
    <location>
        <begin position="521"/>
        <end position="529"/>
    </location>
</feature>
<feature type="transmembrane region" description="Helical" evidence="4 6">
    <location>
        <begin position="530"/>
        <end position="550"/>
    </location>
</feature>
<feature type="topological domain" description="Cytoplasmic" evidence="14">
    <location>
        <begin position="551"/>
        <end position="842"/>
    </location>
</feature>
<feature type="domain" description="ABC transmembrane type-1" evidence="6">
    <location>
        <begin position="265"/>
        <end position="556"/>
    </location>
</feature>
<feature type="domain" description="ABC transporter" evidence="5">
    <location>
        <begin position="590"/>
        <end position="824"/>
    </location>
</feature>
<feature type="region of interest" description="Required for ATPase activity" evidence="3">
    <location>
        <begin position="1"/>
        <end position="236"/>
    </location>
</feature>
<feature type="region of interest" description="Required for the lysosomal targeting" evidence="3">
    <location>
        <begin position="1"/>
        <end position="205"/>
    </location>
</feature>
<feature type="binding site" evidence="1">
    <location>
        <position position="599"/>
    </location>
    <ligand>
        <name>ATP</name>
        <dbReference type="ChEBI" id="CHEBI:30616"/>
    </ligand>
</feature>
<feature type="binding site" evidence="5">
    <location>
        <begin position="623"/>
        <end position="634"/>
    </location>
    <ligand>
        <name>ATP</name>
        <dbReference type="ChEBI" id="CHEBI:30616"/>
    </ligand>
</feature>
<feature type="disulfide bond" evidence="3">
    <location>
        <begin position="8"/>
        <end position="26"/>
    </location>
</feature>
<feature type="mutagenesis site" description="Results in retention of the protein in the Golgi apparatus." evidence="12">
    <original>S</original>
    <variation>G</variation>
    <location>
        <position position="170"/>
    </location>
</feature>
<feature type="mutagenesis site" description="Results in retention of the protein in the Golgi apparatus." evidence="12">
    <original>L</original>
    <variation>P</variation>
    <location>
        <position position="356"/>
    </location>
</feature>
<feature type="mutagenesis site" description="Results in retention of the protein in the Golgi apparatus." evidence="12">
    <original>G</original>
    <variation>E</variation>
    <location>
        <position position="579"/>
    </location>
</feature>
<reference key="1">
    <citation type="journal article" date="2005" name="Science">
        <title>The transcriptional landscape of the mammalian genome.</title>
        <authorList>
            <person name="Carninci P."/>
            <person name="Kasukawa T."/>
            <person name="Katayama S."/>
            <person name="Gough J."/>
            <person name="Frith M.C."/>
            <person name="Maeda N."/>
            <person name="Oyama R."/>
            <person name="Ravasi T."/>
            <person name="Lenhard B."/>
            <person name="Wells C."/>
            <person name="Kodzius R."/>
            <person name="Shimokawa K."/>
            <person name="Bajic V.B."/>
            <person name="Brenner S.E."/>
            <person name="Batalov S."/>
            <person name="Forrest A.R."/>
            <person name="Zavolan M."/>
            <person name="Davis M.J."/>
            <person name="Wilming L.G."/>
            <person name="Aidinis V."/>
            <person name="Allen J.E."/>
            <person name="Ambesi-Impiombato A."/>
            <person name="Apweiler R."/>
            <person name="Aturaliya R.N."/>
            <person name="Bailey T.L."/>
            <person name="Bansal M."/>
            <person name="Baxter L."/>
            <person name="Beisel K.W."/>
            <person name="Bersano T."/>
            <person name="Bono H."/>
            <person name="Chalk A.M."/>
            <person name="Chiu K.P."/>
            <person name="Choudhary V."/>
            <person name="Christoffels A."/>
            <person name="Clutterbuck D.R."/>
            <person name="Crowe M.L."/>
            <person name="Dalla E."/>
            <person name="Dalrymple B.P."/>
            <person name="de Bono B."/>
            <person name="Della Gatta G."/>
            <person name="di Bernardo D."/>
            <person name="Down T."/>
            <person name="Engstrom P."/>
            <person name="Fagiolini M."/>
            <person name="Faulkner G."/>
            <person name="Fletcher C.F."/>
            <person name="Fukushima T."/>
            <person name="Furuno M."/>
            <person name="Futaki S."/>
            <person name="Gariboldi M."/>
            <person name="Georgii-Hemming P."/>
            <person name="Gingeras T.R."/>
            <person name="Gojobori T."/>
            <person name="Green R.E."/>
            <person name="Gustincich S."/>
            <person name="Harbers M."/>
            <person name="Hayashi Y."/>
            <person name="Hensch T.K."/>
            <person name="Hirokawa N."/>
            <person name="Hill D."/>
            <person name="Huminiecki L."/>
            <person name="Iacono M."/>
            <person name="Ikeo K."/>
            <person name="Iwama A."/>
            <person name="Ishikawa T."/>
            <person name="Jakt M."/>
            <person name="Kanapin A."/>
            <person name="Katoh M."/>
            <person name="Kawasawa Y."/>
            <person name="Kelso J."/>
            <person name="Kitamura H."/>
            <person name="Kitano H."/>
            <person name="Kollias G."/>
            <person name="Krishnan S.P."/>
            <person name="Kruger A."/>
            <person name="Kummerfeld S.K."/>
            <person name="Kurochkin I.V."/>
            <person name="Lareau L.F."/>
            <person name="Lazarevic D."/>
            <person name="Lipovich L."/>
            <person name="Liu J."/>
            <person name="Liuni S."/>
            <person name="McWilliam S."/>
            <person name="Madan Babu M."/>
            <person name="Madera M."/>
            <person name="Marchionni L."/>
            <person name="Matsuda H."/>
            <person name="Matsuzawa S."/>
            <person name="Miki H."/>
            <person name="Mignone F."/>
            <person name="Miyake S."/>
            <person name="Morris K."/>
            <person name="Mottagui-Tabar S."/>
            <person name="Mulder N."/>
            <person name="Nakano N."/>
            <person name="Nakauchi H."/>
            <person name="Ng P."/>
            <person name="Nilsson R."/>
            <person name="Nishiguchi S."/>
            <person name="Nishikawa S."/>
            <person name="Nori F."/>
            <person name="Ohara O."/>
            <person name="Okazaki Y."/>
            <person name="Orlando V."/>
            <person name="Pang K.C."/>
            <person name="Pavan W.J."/>
            <person name="Pavesi G."/>
            <person name="Pesole G."/>
            <person name="Petrovsky N."/>
            <person name="Piazza S."/>
            <person name="Reed J."/>
            <person name="Reid J.F."/>
            <person name="Ring B.Z."/>
            <person name="Ringwald M."/>
            <person name="Rost B."/>
            <person name="Ruan Y."/>
            <person name="Salzberg S.L."/>
            <person name="Sandelin A."/>
            <person name="Schneider C."/>
            <person name="Schoenbach C."/>
            <person name="Sekiguchi K."/>
            <person name="Semple C.A."/>
            <person name="Seno S."/>
            <person name="Sessa L."/>
            <person name="Sheng Y."/>
            <person name="Shibata Y."/>
            <person name="Shimada H."/>
            <person name="Shimada K."/>
            <person name="Silva D."/>
            <person name="Sinclair B."/>
            <person name="Sperling S."/>
            <person name="Stupka E."/>
            <person name="Sugiura K."/>
            <person name="Sultana R."/>
            <person name="Takenaka Y."/>
            <person name="Taki K."/>
            <person name="Tammoja K."/>
            <person name="Tan S.L."/>
            <person name="Tang S."/>
            <person name="Taylor M.S."/>
            <person name="Tegner J."/>
            <person name="Teichmann S.A."/>
            <person name="Ueda H.R."/>
            <person name="van Nimwegen E."/>
            <person name="Verardo R."/>
            <person name="Wei C.L."/>
            <person name="Yagi K."/>
            <person name="Yamanishi H."/>
            <person name="Zabarovsky E."/>
            <person name="Zhu S."/>
            <person name="Zimmer A."/>
            <person name="Hide W."/>
            <person name="Bult C."/>
            <person name="Grimmond S.M."/>
            <person name="Teasdale R.D."/>
            <person name="Liu E.T."/>
            <person name="Brusic V."/>
            <person name="Quackenbush J."/>
            <person name="Wahlestedt C."/>
            <person name="Mattick J.S."/>
            <person name="Hume D.A."/>
            <person name="Kai C."/>
            <person name="Sasaki D."/>
            <person name="Tomaru Y."/>
            <person name="Fukuda S."/>
            <person name="Kanamori-Katayama M."/>
            <person name="Suzuki M."/>
            <person name="Aoki J."/>
            <person name="Arakawa T."/>
            <person name="Iida J."/>
            <person name="Imamura K."/>
            <person name="Itoh M."/>
            <person name="Kato T."/>
            <person name="Kawaji H."/>
            <person name="Kawagashira N."/>
            <person name="Kawashima T."/>
            <person name="Kojima M."/>
            <person name="Kondo S."/>
            <person name="Konno H."/>
            <person name="Nakano K."/>
            <person name="Ninomiya N."/>
            <person name="Nishio T."/>
            <person name="Okada M."/>
            <person name="Plessy C."/>
            <person name="Shibata K."/>
            <person name="Shiraki T."/>
            <person name="Suzuki S."/>
            <person name="Tagami M."/>
            <person name="Waki K."/>
            <person name="Watahiki A."/>
            <person name="Okamura-Oho Y."/>
            <person name="Suzuki H."/>
            <person name="Kawai J."/>
            <person name="Hayashizaki Y."/>
        </authorList>
    </citation>
    <scope>NUCLEOTIDE SEQUENCE [LARGE SCALE MRNA]</scope>
    <source>
        <strain>C57BL/6J</strain>
        <tissue>Bone marrow</tissue>
        <tissue>Kidney</tissue>
        <tissue>Lung</tissue>
    </source>
</reference>
<reference key="2">
    <citation type="journal article" date="2004" name="Genome Res.">
        <title>The status, quality, and expansion of the NIH full-length cDNA project: the Mammalian Gene Collection (MGC).</title>
        <authorList>
            <consortium name="The MGC Project Team"/>
        </authorList>
    </citation>
    <scope>NUCLEOTIDE SEQUENCE [LARGE SCALE MRNA]</scope>
    <source>
        <strain>FVB/N</strain>
        <tissue>Mammary tumor</tissue>
    </source>
</reference>
<reference key="3">
    <citation type="submission" date="2009-01" db="UniProtKB">
        <authorList>
            <person name="Lubec G."/>
            <person name="Sunyer B."/>
            <person name="Chen W.-Q."/>
        </authorList>
    </citation>
    <scope>PROTEIN SEQUENCE OF 764-771</scope>
    <scope>IDENTIFICATION BY MASS SPECTROMETRY</scope>
    <source>
        <strain>OF1</strain>
        <tissue>Hippocampus</tissue>
    </source>
</reference>
<reference key="4">
    <citation type="journal article" date="2006" name="Nature">
        <title>Identification of a mammalian mitochondrial porphyrin transporter.</title>
        <authorList>
            <person name="Krishnamurthy P.C."/>
            <person name="Du G."/>
            <person name="Fukuda Y."/>
            <person name="Sun D."/>
            <person name="Sampath J."/>
            <person name="Mercer K.E."/>
            <person name="Wang J."/>
            <person name="Sosa-Pineda B."/>
            <person name="Murti K.G."/>
            <person name="Schuetz J.D."/>
        </authorList>
    </citation>
    <scope>FUNCTION</scope>
    <scope>DEVELOPMENTAL STAGE</scope>
    <scope>INDUCTION</scope>
    <scope>SUBCELLULAR LOCATION</scope>
    <scope>SUBUNIT</scope>
</reference>
<reference key="5">
    <citation type="journal article" date="2010" name="Cell">
        <title>A tissue-specific atlas of mouse protein phosphorylation and expression.</title>
        <authorList>
            <person name="Huttlin E.L."/>
            <person name="Jedrychowski M.P."/>
            <person name="Elias J.E."/>
            <person name="Goswami T."/>
            <person name="Rad R."/>
            <person name="Beausoleil S.A."/>
            <person name="Villen J."/>
            <person name="Haas W."/>
            <person name="Sowa M.E."/>
            <person name="Gygi S.P."/>
        </authorList>
    </citation>
    <scope>IDENTIFICATION BY MASS SPECTROMETRY [LARGE SCALE ANALYSIS]</scope>
    <source>
        <tissue>Brown adipose tissue</tissue>
        <tissue>Kidney</tissue>
        <tissue>Liver</tissue>
        <tissue>Lung</tissue>
        <tissue>Pancreas</tissue>
        <tissue>Spleen</tissue>
        <tissue>Testis</tissue>
    </source>
</reference>
<reference key="6">
    <citation type="journal article" date="2011" name="J. Biol. Chem.">
        <title>Conserved intramolecular disulfide bond is critical to trafficking and fate of ATP-binding cassette (ABC) transporters ABCB6 and sulfonylurea receptor 1 (SUR1)/ABCC8.</title>
        <authorList>
            <person name="Fukuda Y."/>
            <person name="Aguilar-Bryan L."/>
            <person name="Vaxillaire M."/>
            <person name="Dechaume A."/>
            <person name="Wang Y."/>
            <person name="Dean M."/>
            <person name="Moitra K."/>
            <person name="Bryan J."/>
            <person name="Schuetz J.D."/>
        </authorList>
    </citation>
    <scope>GLYCOSYLATION</scope>
</reference>
<reference key="7">
    <citation type="journal article" date="2011" name="Toxicol. Sci.">
        <title>The ATP-binding cassette transporter ABCB6 is induced by arsenic and protects against arsenic cytotoxicity.</title>
        <authorList>
            <person name="Chavan H."/>
            <person name="Oruganti M."/>
            <person name="Krishnamurthy P."/>
        </authorList>
    </citation>
    <scope>INDUCTION</scope>
</reference>
<reference key="8">
    <citation type="journal article" date="2012" name="J. Biol. Chem.">
        <title>ATP-dependent mitochondrial porphyrin importer ABCB6 protects against phenylhydrazine toxicity.</title>
        <authorList>
            <person name="Ulrich D.L."/>
            <person name="Lynch J."/>
            <person name="Wang Y."/>
            <person name="Fukuda Y."/>
            <person name="Nachagari D."/>
            <person name="Du G."/>
            <person name="Sun D."/>
            <person name="Fan Y."/>
            <person name="Tsurkan L."/>
            <person name="Potter P.M."/>
            <person name="Rehg J.E."/>
            <person name="Schuetz J.D."/>
        </authorList>
    </citation>
    <scope>DISRUPTION PHENOTYPE</scope>
    <scope>BIOPHYSICOCHEMICAL PROPERTIES</scope>
    <scope>INDUCTION</scope>
    <scope>FUNCTION</scope>
    <scope>CATALYTIC ACTIVITY</scope>
</reference>
<reference key="9">
    <citation type="journal article" date="2012" name="PLoS ONE">
        <title>Shifting the paradigm: the putative mitochondrial protein ABCB6 resides in the lysosomes of cells and in the plasma membrane of erythrocytes.</title>
        <authorList>
            <person name="Kiss K."/>
            <person name="Brozik A."/>
            <person name="Kucsma N."/>
            <person name="Toth A."/>
            <person name="Gera M."/>
            <person name="Berry L."/>
            <person name="Vallentin A."/>
            <person name="Vial H."/>
            <person name="Vidal M."/>
            <person name="Szakacs G."/>
        </authorList>
    </citation>
    <scope>INDUCTION</scope>
    <scope>SUBCELLULAR LOCATION</scope>
</reference>
<reference key="10">
    <citation type="journal article" date="2013" name="J. Invest. Dermatol.">
        <title>Mutations in ABCB6 cause dyschromatosis universalis hereditaria.</title>
        <authorList>
            <person name="Zhang C."/>
            <person name="Li D."/>
            <person name="Zhang J."/>
            <person name="Chen X."/>
            <person name="Huang M."/>
            <person name="Archacki S."/>
            <person name="Tian Y."/>
            <person name="Ren W."/>
            <person name="Mei A."/>
            <person name="Zhang Q."/>
            <person name="Fang M."/>
            <person name="Su Z."/>
            <person name="Yin Y."/>
            <person name="Liu D."/>
            <person name="Chen Y."/>
            <person name="Cui X."/>
            <person name="Li C."/>
            <person name="Yang H."/>
            <person name="Wang Q."/>
            <person name="Wang J."/>
            <person name="Liu M."/>
            <person name="Deng Y."/>
        </authorList>
    </citation>
    <scope>SUBCELLULAR LOCATION</scope>
    <scope>MUTAGENESIS OF SER-170; LEU-356 AND GLY-579</scope>
</reference>
<reference key="11">
    <citation type="journal article" date="2016" name="Nat. Commun.">
        <title>The severity of hereditary porphyria is modulated by the porphyrin exporter and Lan antigen ABCB6.</title>
        <authorList>
            <person name="Fukuda Y."/>
            <person name="Cheong P.L."/>
            <person name="Lynch J."/>
            <person name="Brighton C."/>
            <person name="Frase S."/>
            <person name="Kargas V."/>
            <person name="Rampersaud E."/>
            <person name="Wang Y."/>
            <person name="Sankaran V.G."/>
            <person name="Yu B."/>
            <person name="Ney P.A."/>
            <person name="Weiss M.J."/>
            <person name="Vogel P."/>
            <person name="Bond P.J."/>
            <person name="Ford R.C."/>
            <person name="Trent R.J."/>
            <person name="Schuetz J.D."/>
        </authorList>
    </citation>
    <scope>CATALYTIC ACTIVITY</scope>
    <scope>FUNCTION</scope>
    <scope>BIOPHYSICOCHEMICAL PROPERTIES</scope>
    <scope>DISRUPTION PHENOTYPE</scope>
</reference>
<protein>
    <recommendedName>
        <fullName evidence="14">ATP-binding cassette sub-family B member 6</fullName>
    </recommendedName>
    <alternativeName>
        <fullName evidence="3">ABC-type heme transporter ABCB6</fullName>
        <ecNumber evidence="3">7.6.2.5</ecNumber>
    </alternativeName>
</protein>
<accession>Q9DC29</accession>
<accession>Q3U7N5</accession>
<accession>Q3UAZ6</accession>